<keyword id="KW-0963">Cytoplasm</keyword>
<keyword id="KW-0255">Endonuclease</keyword>
<keyword id="KW-0378">Hydrolase</keyword>
<keyword id="KW-0460">Magnesium</keyword>
<keyword id="KW-0479">Metal-binding</keyword>
<keyword id="KW-0540">Nuclease</keyword>
<comment type="function">
    <text evidence="1">Endonuclease that specifically degrades the RNA of RNA-DNA hybrids.</text>
</comment>
<comment type="catalytic activity">
    <reaction evidence="1">
        <text>Endonucleolytic cleavage to 5'-phosphomonoester.</text>
        <dbReference type="EC" id="3.1.26.4"/>
    </reaction>
</comment>
<comment type="cofactor">
    <cofactor evidence="1">
        <name>Mg(2+)</name>
        <dbReference type="ChEBI" id="CHEBI:18420"/>
    </cofactor>
    <text evidence="1">Binds 1 Mg(2+) ion per subunit. May bind a second metal ion at a regulatory site, or after substrate binding.</text>
</comment>
<comment type="subunit">
    <text evidence="1">Monomer.</text>
</comment>
<comment type="subcellular location">
    <subcellularLocation>
        <location evidence="1">Cytoplasm</location>
    </subcellularLocation>
</comment>
<comment type="similarity">
    <text evidence="1">Belongs to the RNase H family.</text>
</comment>
<sequence>MKSIEVHTDGSCLGNPGPGGWAALLRYNGREKELAGGEAVSTNNRMELMAAIMALETLTEPCQIVLHTDSQYVRQGITEWMPGWVRRNWKTAGCDPVKNRELWERLHAATQRHRIDWRWVKGHNGDPDNERVDVLARNQAIAQRGGLATS</sequence>
<feature type="chain" id="PRO_0000195422" description="Ribonuclease H">
    <location>
        <begin position="1"/>
        <end position="150"/>
    </location>
</feature>
<feature type="domain" description="RNase H type-1" evidence="2">
    <location>
        <begin position="1"/>
        <end position="141"/>
    </location>
</feature>
<feature type="binding site" evidence="1">
    <location>
        <position position="9"/>
    </location>
    <ligand>
        <name>Mg(2+)</name>
        <dbReference type="ChEBI" id="CHEBI:18420"/>
        <label>1</label>
    </ligand>
</feature>
<feature type="binding site" evidence="1">
    <location>
        <position position="9"/>
    </location>
    <ligand>
        <name>Mg(2+)</name>
        <dbReference type="ChEBI" id="CHEBI:18420"/>
        <label>2</label>
    </ligand>
</feature>
<feature type="binding site" evidence="1">
    <location>
        <position position="47"/>
    </location>
    <ligand>
        <name>Mg(2+)</name>
        <dbReference type="ChEBI" id="CHEBI:18420"/>
        <label>1</label>
    </ligand>
</feature>
<feature type="binding site" evidence="1">
    <location>
        <position position="69"/>
    </location>
    <ligand>
        <name>Mg(2+)</name>
        <dbReference type="ChEBI" id="CHEBI:18420"/>
        <label>1</label>
    </ligand>
</feature>
<feature type="binding site" evidence="1">
    <location>
        <position position="133"/>
    </location>
    <ligand>
        <name>Mg(2+)</name>
        <dbReference type="ChEBI" id="CHEBI:18420"/>
        <label>2</label>
    </ligand>
</feature>
<gene>
    <name evidence="1" type="primary">rnhA</name>
    <name type="ordered locus">XAC1089</name>
</gene>
<proteinExistence type="inferred from homology"/>
<organism>
    <name type="scientific">Xanthomonas axonopodis pv. citri (strain 306)</name>
    <dbReference type="NCBI Taxonomy" id="190486"/>
    <lineage>
        <taxon>Bacteria</taxon>
        <taxon>Pseudomonadati</taxon>
        <taxon>Pseudomonadota</taxon>
        <taxon>Gammaproteobacteria</taxon>
        <taxon>Lysobacterales</taxon>
        <taxon>Lysobacteraceae</taxon>
        <taxon>Xanthomonas</taxon>
    </lineage>
</organism>
<evidence type="ECO:0000255" key="1">
    <source>
        <dbReference type="HAMAP-Rule" id="MF_00042"/>
    </source>
</evidence>
<evidence type="ECO:0000255" key="2">
    <source>
        <dbReference type="PROSITE-ProRule" id="PRU00408"/>
    </source>
</evidence>
<name>RNH_XANAC</name>
<reference key="1">
    <citation type="journal article" date="2002" name="Nature">
        <title>Comparison of the genomes of two Xanthomonas pathogens with differing host specificities.</title>
        <authorList>
            <person name="da Silva A.C.R."/>
            <person name="Ferro J.A."/>
            <person name="Reinach F.C."/>
            <person name="Farah C.S."/>
            <person name="Furlan L.R."/>
            <person name="Quaggio R.B."/>
            <person name="Monteiro-Vitorello C.B."/>
            <person name="Van Sluys M.A."/>
            <person name="Almeida N.F. Jr."/>
            <person name="Alves L.M.C."/>
            <person name="do Amaral A.M."/>
            <person name="Bertolini M.C."/>
            <person name="Camargo L.E.A."/>
            <person name="Camarotte G."/>
            <person name="Cannavan F."/>
            <person name="Cardozo J."/>
            <person name="Chambergo F."/>
            <person name="Ciapina L.P."/>
            <person name="Cicarelli R.M.B."/>
            <person name="Coutinho L.L."/>
            <person name="Cursino-Santos J.R."/>
            <person name="El-Dorry H."/>
            <person name="Faria J.B."/>
            <person name="Ferreira A.J.S."/>
            <person name="Ferreira R.C.C."/>
            <person name="Ferro M.I.T."/>
            <person name="Formighieri E.F."/>
            <person name="Franco M.C."/>
            <person name="Greggio C.C."/>
            <person name="Gruber A."/>
            <person name="Katsuyama A.M."/>
            <person name="Kishi L.T."/>
            <person name="Leite R.P."/>
            <person name="Lemos E.G.M."/>
            <person name="Lemos M.V.F."/>
            <person name="Locali E.C."/>
            <person name="Machado M.A."/>
            <person name="Madeira A.M.B.N."/>
            <person name="Martinez-Rossi N.M."/>
            <person name="Martins E.C."/>
            <person name="Meidanis J."/>
            <person name="Menck C.F.M."/>
            <person name="Miyaki C.Y."/>
            <person name="Moon D.H."/>
            <person name="Moreira L.M."/>
            <person name="Novo M.T.M."/>
            <person name="Okura V.K."/>
            <person name="Oliveira M.C."/>
            <person name="Oliveira V.R."/>
            <person name="Pereira H.A."/>
            <person name="Rossi A."/>
            <person name="Sena J.A.D."/>
            <person name="Silva C."/>
            <person name="de Souza R.F."/>
            <person name="Spinola L.A.F."/>
            <person name="Takita M.A."/>
            <person name="Tamura R.E."/>
            <person name="Teixeira E.C."/>
            <person name="Tezza R.I.D."/>
            <person name="Trindade dos Santos M."/>
            <person name="Truffi D."/>
            <person name="Tsai S.M."/>
            <person name="White F.F."/>
            <person name="Setubal J.C."/>
            <person name="Kitajima J.P."/>
        </authorList>
    </citation>
    <scope>NUCLEOTIDE SEQUENCE [LARGE SCALE GENOMIC DNA]</scope>
    <source>
        <strain>306</strain>
    </source>
</reference>
<dbReference type="EC" id="3.1.26.4" evidence="1"/>
<dbReference type="EMBL" id="AE008923">
    <property type="protein sequence ID" value="AAM35964.1"/>
    <property type="molecule type" value="Genomic_DNA"/>
</dbReference>
<dbReference type="RefSeq" id="WP_011050697.1">
    <property type="nucleotide sequence ID" value="NC_003919.1"/>
</dbReference>
<dbReference type="SMR" id="Q8PNH8"/>
<dbReference type="GeneID" id="66910267"/>
<dbReference type="KEGG" id="xac:XAC1089"/>
<dbReference type="eggNOG" id="COG0328">
    <property type="taxonomic scope" value="Bacteria"/>
</dbReference>
<dbReference type="HOGENOM" id="CLU_030894_6_0_6"/>
<dbReference type="Proteomes" id="UP000000576">
    <property type="component" value="Chromosome"/>
</dbReference>
<dbReference type="GO" id="GO:0005737">
    <property type="term" value="C:cytoplasm"/>
    <property type="evidence" value="ECO:0007669"/>
    <property type="project" value="UniProtKB-SubCell"/>
</dbReference>
<dbReference type="GO" id="GO:0000287">
    <property type="term" value="F:magnesium ion binding"/>
    <property type="evidence" value="ECO:0007669"/>
    <property type="project" value="UniProtKB-UniRule"/>
</dbReference>
<dbReference type="GO" id="GO:0003676">
    <property type="term" value="F:nucleic acid binding"/>
    <property type="evidence" value="ECO:0007669"/>
    <property type="project" value="InterPro"/>
</dbReference>
<dbReference type="GO" id="GO:0004523">
    <property type="term" value="F:RNA-DNA hybrid ribonuclease activity"/>
    <property type="evidence" value="ECO:0007669"/>
    <property type="project" value="UniProtKB-UniRule"/>
</dbReference>
<dbReference type="GO" id="GO:0043137">
    <property type="term" value="P:DNA replication, removal of RNA primer"/>
    <property type="evidence" value="ECO:0007669"/>
    <property type="project" value="TreeGrafter"/>
</dbReference>
<dbReference type="CDD" id="cd09278">
    <property type="entry name" value="RNase_HI_prokaryote_like"/>
    <property type="match status" value="1"/>
</dbReference>
<dbReference type="FunFam" id="3.30.420.10:FF:000008">
    <property type="entry name" value="Ribonuclease H"/>
    <property type="match status" value="1"/>
</dbReference>
<dbReference type="Gene3D" id="3.30.420.10">
    <property type="entry name" value="Ribonuclease H-like superfamily/Ribonuclease H"/>
    <property type="match status" value="1"/>
</dbReference>
<dbReference type="HAMAP" id="MF_00042">
    <property type="entry name" value="RNase_H"/>
    <property type="match status" value="1"/>
</dbReference>
<dbReference type="InterPro" id="IPR050092">
    <property type="entry name" value="RNase_H"/>
</dbReference>
<dbReference type="InterPro" id="IPR012337">
    <property type="entry name" value="RNaseH-like_sf"/>
</dbReference>
<dbReference type="InterPro" id="IPR002156">
    <property type="entry name" value="RNaseH_domain"/>
</dbReference>
<dbReference type="InterPro" id="IPR036397">
    <property type="entry name" value="RNaseH_sf"/>
</dbReference>
<dbReference type="InterPro" id="IPR022892">
    <property type="entry name" value="RNaseHI"/>
</dbReference>
<dbReference type="NCBIfam" id="NF001236">
    <property type="entry name" value="PRK00203.1"/>
    <property type="match status" value="1"/>
</dbReference>
<dbReference type="PANTHER" id="PTHR10642">
    <property type="entry name" value="RIBONUCLEASE H1"/>
    <property type="match status" value="1"/>
</dbReference>
<dbReference type="PANTHER" id="PTHR10642:SF26">
    <property type="entry name" value="RIBONUCLEASE H1"/>
    <property type="match status" value="1"/>
</dbReference>
<dbReference type="Pfam" id="PF00075">
    <property type="entry name" value="RNase_H"/>
    <property type="match status" value="1"/>
</dbReference>
<dbReference type="SUPFAM" id="SSF53098">
    <property type="entry name" value="Ribonuclease H-like"/>
    <property type="match status" value="1"/>
</dbReference>
<dbReference type="PROSITE" id="PS50879">
    <property type="entry name" value="RNASE_H_1"/>
    <property type="match status" value="1"/>
</dbReference>
<accession>Q8PNH8</accession>
<protein>
    <recommendedName>
        <fullName evidence="1">Ribonuclease H</fullName>
        <shortName evidence="1">RNase H</shortName>
        <ecNumber evidence="1">3.1.26.4</ecNumber>
    </recommendedName>
</protein>